<evidence type="ECO:0000255" key="1">
    <source>
        <dbReference type="HAMAP-Rule" id="MF_00107"/>
    </source>
</evidence>
<comment type="function">
    <text evidence="1">Involved in the biosynthesis of isopentenyl diphosphate (IPP) and dimethylallyl diphosphate (DMAPP), two major building blocks of isoprenoid compounds. Catalyzes the conversion of 4-diphosphocytidyl-2-C-methyl-D-erythritol 2-phosphate (CDP-ME2P) to 2-C-methyl-D-erythritol 2,4-cyclodiphosphate (ME-CPP) with a corresponding release of cytidine 5-monophosphate (CMP).</text>
</comment>
<comment type="catalytic activity">
    <reaction evidence="1">
        <text>4-CDP-2-C-methyl-D-erythritol 2-phosphate = 2-C-methyl-D-erythritol 2,4-cyclic diphosphate + CMP</text>
        <dbReference type="Rhea" id="RHEA:23864"/>
        <dbReference type="ChEBI" id="CHEBI:57919"/>
        <dbReference type="ChEBI" id="CHEBI:58483"/>
        <dbReference type="ChEBI" id="CHEBI:60377"/>
        <dbReference type="EC" id="4.6.1.12"/>
    </reaction>
</comment>
<comment type="cofactor">
    <cofactor evidence="1">
        <name>a divalent metal cation</name>
        <dbReference type="ChEBI" id="CHEBI:60240"/>
    </cofactor>
    <text evidence="1">Binds 1 divalent metal cation per subunit.</text>
</comment>
<comment type="pathway">
    <text evidence="1">Isoprenoid biosynthesis; isopentenyl diphosphate biosynthesis via DXP pathway; isopentenyl diphosphate from 1-deoxy-D-xylulose 5-phosphate: step 4/6.</text>
</comment>
<comment type="subunit">
    <text evidence="1">Homotrimer.</text>
</comment>
<comment type="similarity">
    <text evidence="1">Belongs to the IspF family.</text>
</comment>
<protein>
    <recommendedName>
        <fullName evidence="1">2-C-methyl-D-erythritol 2,4-cyclodiphosphate synthase</fullName>
        <shortName evidence="1">MECDP-synthase</shortName>
        <shortName evidence="1">MECPP-synthase</shortName>
        <shortName evidence="1">MECPS</shortName>
        <ecNumber evidence="1">4.6.1.12</ecNumber>
    </recommendedName>
</protein>
<sequence length="159" mass="16903">MKIRIGHGFDVHKFGGEPPLILGGVTVPYEVGLIAHSDGDVVLHAISDAILGAMALGDIGKHFPDTDAEFKGADSRVLLKHCYQLALNMGFSMSNLDVTVIAQAPKMAPHIEAIRSVIAADLQSDIDDINVKATTTEKLGFTGRKEGIAVEAVVLMTKI</sequence>
<dbReference type="EC" id="4.6.1.12" evidence="1"/>
<dbReference type="EMBL" id="CP000472">
    <property type="protein sequence ID" value="ACJ28146.1"/>
    <property type="molecule type" value="Genomic_DNA"/>
</dbReference>
<dbReference type="RefSeq" id="WP_020911524.1">
    <property type="nucleotide sequence ID" value="NC_011566.1"/>
</dbReference>
<dbReference type="SMR" id="B8CJP9"/>
<dbReference type="STRING" id="225849.swp_1359"/>
<dbReference type="KEGG" id="swp:swp_1359"/>
<dbReference type="eggNOG" id="COG0245">
    <property type="taxonomic scope" value="Bacteria"/>
</dbReference>
<dbReference type="HOGENOM" id="CLU_084630_2_0_6"/>
<dbReference type="OrthoDB" id="9804336at2"/>
<dbReference type="UniPathway" id="UPA00056">
    <property type="reaction ID" value="UER00095"/>
</dbReference>
<dbReference type="Proteomes" id="UP000000753">
    <property type="component" value="Chromosome"/>
</dbReference>
<dbReference type="GO" id="GO:0008685">
    <property type="term" value="F:2-C-methyl-D-erythritol 2,4-cyclodiphosphate synthase activity"/>
    <property type="evidence" value="ECO:0007669"/>
    <property type="project" value="UniProtKB-UniRule"/>
</dbReference>
<dbReference type="GO" id="GO:0046872">
    <property type="term" value="F:metal ion binding"/>
    <property type="evidence" value="ECO:0007669"/>
    <property type="project" value="UniProtKB-KW"/>
</dbReference>
<dbReference type="GO" id="GO:0019288">
    <property type="term" value="P:isopentenyl diphosphate biosynthetic process, methylerythritol 4-phosphate pathway"/>
    <property type="evidence" value="ECO:0007669"/>
    <property type="project" value="UniProtKB-UniRule"/>
</dbReference>
<dbReference type="GO" id="GO:0016114">
    <property type="term" value="P:terpenoid biosynthetic process"/>
    <property type="evidence" value="ECO:0007669"/>
    <property type="project" value="InterPro"/>
</dbReference>
<dbReference type="CDD" id="cd00554">
    <property type="entry name" value="MECDP_synthase"/>
    <property type="match status" value="1"/>
</dbReference>
<dbReference type="FunFam" id="3.30.1330.50:FF:000001">
    <property type="entry name" value="2-C-methyl-D-erythritol 2,4-cyclodiphosphate synthase"/>
    <property type="match status" value="1"/>
</dbReference>
<dbReference type="Gene3D" id="3.30.1330.50">
    <property type="entry name" value="2-C-methyl-D-erythritol 2,4-cyclodiphosphate synthase"/>
    <property type="match status" value="1"/>
</dbReference>
<dbReference type="HAMAP" id="MF_00107">
    <property type="entry name" value="IspF"/>
    <property type="match status" value="1"/>
</dbReference>
<dbReference type="InterPro" id="IPR003526">
    <property type="entry name" value="MECDP_synthase"/>
</dbReference>
<dbReference type="InterPro" id="IPR020555">
    <property type="entry name" value="MECDP_synthase_CS"/>
</dbReference>
<dbReference type="InterPro" id="IPR036571">
    <property type="entry name" value="MECDP_synthase_sf"/>
</dbReference>
<dbReference type="NCBIfam" id="TIGR00151">
    <property type="entry name" value="ispF"/>
    <property type="match status" value="1"/>
</dbReference>
<dbReference type="PANTHER" id="PTHR43181">
    <property type="entry name" value="2-C-METHYL-D-ERYTHRITOL 2,4-CYCLODIPHOSPHATE SYNTHASE, CHLOROPLASTIC"/>
    <property type="match status" value="1"/>
</dbReference>
<dbReference type="PANTHER" id="PTHR43181:SF1">
    <property type="entry name" value="2-C-METHYL-D-ERYTHRITOL 2,4-CYCLODIPHOSPHATE SYNTHASE, CHLOROPLASTIC"/>
    <property type="match status" value="1"/>
</dbReference>
<dbReference type="Pfam" id="PF02542">
    <property type="entry name" value="YgbB"/>
    <property type="match status" value="1"/>
</dbReference>
<dbReference type="SUPFAM" id="SSF69765">
    <property type="entry name" value="IpsF-like"/>
    <property type="match status" value="1"/>
</dbReference>
<dbReference type="PROSITE" id="PS01350">
    <property type="entry name" value="ISPF"/>
    <property type="match status" value="1"/>
</dbReference>
<accession>B8CJP9</accession>
<reference key="1">
    <citation type="journal article" date="2008" name="PLoS ONE">
        <title>Environmental adaptation: genomic analysis of the piezotolerant and psychrotolerant deep-sea iron reducing bacterium Shewanella piezotolerans WP3.</title>
        <authorList>
            <person name="Wang F."/>
            <person name="Wang J."/>
            <person name="Jian H."/>
            <person name="Zhang B."/>
            <person name="Li S."/>
            <person name="Wang F."/>
            <person name="Zeng X."/>
            <person name="Gao L."/>
            <person name="Bartlett D.H."/>
            <person name="Yu J."/>
            <person name="Hu S."/>
            <person name="Xiao X."/>
        </authorList>
    </citation>
    <scope>NUCLEOTIDE SEQUENCE [LARGE SCALE GENOMIC DNA]</scope>
    <source>
        <strain>WP3 / JCM 13877</strain>
    </source>
</reference>
<keyword id="KW-0414">Isoprene biosynthesis</keyword>
<keyword id="KW-0456">Lyase</keyword>
<keyword id="KW-0479">Metal-binding</keyword>
<gene>
    <name evidence="1" type="primary">ispF</name>
    <name type="ordered locus">swp_1359</name>
</gene>
<feature type="chain" id="PRO_1000117434" description="2-C-methyl-D-erythritol 2,4-cyclodiphosphate synthase">
    <location>
        <begin position="1"/>
        <end position="159"/>
    </location>
</feature>
<feature type="binding site" evidence="1">
    <location>
        <begin position="10"/>
        <end position="12"/>
    </location>
    <ligand>
        <name>4-CDP-2-C-methyl-D-erythritol 2-phosphate</name>
        <dbReference type="ChEBI" id="CHEBI:57919"/>
    </ligand>
</feature>
<feature type="binding site" evidence="1">
    <location>
        <position position="10"/>
    </location>
    <ligand>
        <name>a divalent metal cation</name>
        <dbReference type="ChEBI" id="CHEBI:60240"/>
    </ligand>
</feature>
<feature type="binding site" evidence="1">
    <location>
        <position position="12"/>
    </location>
    <ligand>
        <name>a divalent metal cation</name>
        <dbReference type="ChEBI" id="CHEBI:60240"/>
    </ligand>
</feature>
<feature type="binding site" evidence="1">
    <location>
        <begin position="36"/>
        <end position="37"/>
    </location>
    <ligand>
        <name>4-CDP-2-C-methyl-D-erythritol 2-phosphate</name>
        <dbReference type="ChEBI" id="CHEBI:57919"/>
    </ligand>
</feature>
<feature type="binding site" evidence="1">
    <location>
        <position position="44"/>
    </location>
    <ligand>
        <name>a divalent metal cation</name>
        <dbReference type="ChEBI" id="CHEBI:60240"/>
    </ligand>
</feature>
<feature type="binding site" evidence="1">
    <location>
        <begin position="58"/>
        <end position="60"/>
    </location>
    <ligand>
        <name>4-CDP-2-C-methyl-D-erythritol 2-phosphate</name>
        <dbReference type="ChEBI" id="CHEBI:57919"/>
    </ligand>
</feature>
<feature type="binding site" evidence="1">
    <location>
        <begin position="63"/>
        <end position="67"/>
    </location>
    <ligand>
        <name>4-CDP-2-C-methyl-D-erythritol 2-phosphate</name>
        <dbReference type="ChEBI" id="CHEBI:57919"/>
    </ligand>
</feature>
<feature type="binding site" evidence="1">
    <location>
        <begin position="102"/>
        <end position="108"/>
    </location>
    <ligand>
        <name>4-CDP-2-C-methyl-D-erythritol 2-phosphate</name>
        <dbReference type="ChEBI" id="CHEBI:57919"/>
    </ligand>
</feature>
<feature type="binding site" evidence="1">
    <location>
        <begin position="134"/>
        <end position="137"/>
    </location>
    <ligand>
        <name>4-CDP-2-C-methyl-D-erythritol 2-phosphate</name>
        <dbReference type="ChEBI" id="CHEBI:57919"/>
    </ligand>
</feature>
<feature type="binding site" evidence="1">
    <location>
        <position position="141"/>
    </location>
    <ligand>
        <name>4-CDP-2-C-methyl-D-erythritol 2-phosphate</name>
        <dbReference type="ChEBI" id="CHEBI:57919"/>
    </ligand>
</feature>
<feature type="binding site" evidence="1">
    <location>
        <position position="144"/>
    </location>
    <ligand>
        <name>4-CDP-2-C-methyl-D-erythritol 2-phosphate</name>
        <dbReference type="ChEBI" id="CHEBI:57919"/>
    </ligand>
</feature>
<feature type="site" description="Transition state stabilizer" evidence="1">
    <location>
        <position position="36"/>
    </location>
</feature>
<feature type="site" description="Transition state stabilizer" evidence="1">
    <location>
        <position position="135"/>
    </location>
</feature>
<proteinExistence type="inferred from homology"/>
<name>ISPF_SHEPW</name>
<organism>
    <name type="scientific">Shewanella piezotolerans (strain WP3 / JCM 13877)</name>
    <dbReference type="NCBI Taxonomy" id="225849"/>
    <lineage>
        <taxon>Bacteria</taxon>
        <taxon>Pseudomonadati</taxon>
        <taxon>Pseudomonadota</taxon>
        <taxon>Gammaproteobacteria</taxon>
        <taxon>Alteromonadales</taxon>
        <taxon>Shewanellaceae</taxon>
        <taxon>Shewanella</taxon>
    </lineage>
</organism>